<sequence>DRDSCVDKSRCSKYGYYQECQDCCKKAGHNGGTCMFFKCKCA</sequence>
<name>KGX17_CENEL</name>
<proteinExistence type="evidence at protein level"/>
<protein>
    <recommendedName>
        <fullName evidence="4">Potassium channel toxin gamma-KTx 1.7</fullName>
    </recommendedName>
    <alternativeName>
        <fullName evidence="5">CeErgTx4</fullName>
        <shortName evidence="4">CeErg4</shortName>
    </alternativeName>
</protein>
<reference key="1">
    <citation type="journal article" date="2008" name="Neurochem. Res.">
        <title>Two novel ergtoxins, blockers of K(+)-channels, purified from the Mexican scorpion Centruroides elegans elegans.</title>
        <authorList>
            <person name="Restano-Cassulini R."/>
            <person name="Olamendi-Portugal T."/>
            <person name="Zamudio F."/>
            <person name="Becerril B."/>
            <person name="Possani L.D."/>
        </authorList>
    </citation>
    <scope>PROTEIN SEQUENCE</scope>
    <scope>FUNCTION</scope>
    <scope>MASS SPECTROMETRY</scope>
    <scope>SUBCELLULAR LOCATION</scope>
    <scope>NOMENCLATURE</scope>
    <source>
        <tissue>Venom</tissue>
    </source>
</reference>
<evidence type="ECO:0000250" key="1"/>
<evidence type="ECO:0000250" key="2">
    <source>
        <dbReference type="UniProtKB" id="Q86QT3"/>
    </source>
</evidence>
<evidence type="ECO:0000269" key="3">
    <source>
    </source>
</evidence>
<evidence type="ECO:0000303" key="4">
    <source>
    </source>
</evidence>
<evidence type="ECO:0000305" key="5"/>
<dbReference type="SMR" id="P0C892"/>
<dbReference type="GO" id="GO:0005576">
    <property type="term" value="C:extracellular region"/>
    <property type="evidence" value="ECO:0007669"/>
    <property type="project" value="UniProtKB-SubCell"/>
</dbReference>
<dbReference type="GO" id="GO:0019870">
    <property type="term" value="F:potassium channel inhibitor activity"/>
    <property type="evidence" value="ECO:0007669"/>
    <property type="project" value="InterPro"/>
</dbReference>
<dbReference type="GO" id="GO:0090729">
    <property type="term" value="F:toxin activity"/>
    <property type="evidence" value="ECO:0007669"/>
    <property type="project" value="UniProtKB-KW"/>
</dbReference>
<dbReference type="Gene3D" id="3.30.30.10">
    <property type="entry name" value="Knottin, scorpion toxin-like"/>
    <property type="match status" value="1"/>
</dbReference>
<dbReference type="InterPro" id="IPR012622">
    <property type="entry name" value="Ergtoxin"/>
</dbReference>
<dbReference type="InterPro" id="IPR036574">
    <property type="entry name" value="Scorpion_toxin-like_sf"/>
</dbReference>
<dbReference type="Pfam" id="PF08086">
    <property type="entry name" value="Toxin_17"/>
    <property type="match status" value="1"/>
</dbReference>
<dbReference type="SUPFAM" id="SSF57095">
    <property type="entry name" value="Scorpion toxin-like"/>
    <property type="match status" value="1"/>
</dbReference>
<dbReference type="PROSITE" id="PS60026">
    <property type="entry name" value="ERGTX"/>
    <property type="match status" value="1"/>
</dbReference>
<comment type="function">
    <text evidence="3">Blocks in a reversible manner human and rat Kv11.1/KCNH2/ERG1 potassium channels. Also completely and irreversibly blocks rat Kv11.2/KCNH6/ERG2 and human Kv11.3/KCNH7/ERG3 channels.</text>
</comment>
<comment type="subcellular location">
    <subcellularLocation>
        <location evidence="3">Secreted</location>
    </subcellularLocation>
</comment>
<comment type="tissue specificity">
    <text evidence="5">Expressed by the venom gland.</text>
</comment>
<comment type="domain">
    <text evidence="1">The presence of a 'disulfide through disulfide knot' structurally defines this protein as a knottin.</text>
</comment>
<comment type="domain">
    <text evidence="2">Has the CSalpha/beta fold, which comprises one or two short alpha helices connected to anti-parallel beta-sheets stabilized by three or four disulfide bonds.</text>
</comment>
<comment type="mass spectrometry"/>
<comment type="miscellaneous">
    <text evidence="3">Negative results: does not affect human Kv11.2/KCNH6/ERG2.</text>
</comment>
<comment type="similarity">
    <text evidence="5">Belongs to the ergtoxin family. Gamma-KTx 1 subfamily.</text>
</comment>
<accession>P0C892</accession>
<organism>
    <name type="scientific">Centruroides elegans</name>
    <name type="common">Bark scorpion</name>
    <dbReference type="NCBI Taxonomy" id="217897"/>
    <lineage>
        <taxon>Eukaryota</taxon>
        <taxon>Metazoa</taxon>
        <taxon>Ecdysozoa</taxon>
        <taxon>Arthropoda</taxon>
        <taxon>Chelicerata</taxon>
        <taxon>Arachnida</taxon>
        <taxon>Scorpiones</taxon>
        <taxon>Buthida</taxon>
        <taxon>Buthoidea</taxon>
        <taxon>Buthidae</taxon>
        <taxon>Centruroides</taxon>
    </lineage>
</organism>
<feature type="chain" id="PRO_0000352490" description="Potassium channel toxin gamma-KTx 1.7" evidence="3">
    <location>
        <begin position="1"/>
        <end position="42"/>
    </location>
</feature>
<feature type="disulfide bond" evidence="2">
    <location>
        <begin position="5"/>
        <end position="23"/>
    </location>
</feature>
<feature type="disulfide bond" evidence="2">
    <location>
        <begin position="11"/>
        <end position="34"/>
    </location>
</feature>
<feature type="disulfide bond" evidence="2">
    <location>
        <begin position="20"/>
        <end position="39"/>
    </location>
</feature>
<feature type="disulfide bond" evidence="2">
    <location>
        <begin position="24"/>
        <end position="41"/>
    </location>
</feature>
<keyword id="KW-0903">Direct protein sequencing</keyword>
<keyword id="KW-1015">Disulfide bond</keyword>
<keyword id="KW-0872">Ion channel impairing toxin</keyword>
<keyword id="KW-0960">Knottin</keyword>
<keyword id="KW-0528">Neurotoxin</keyword>
<keyword id="KW-0632">Potassium channel impairing toxin</keyword>
<keyword id="KW-0964">Secreted</keyword>
<keyword id="KW-0800">Toxin</keyword>
<keyword id="KW-1220">Voltage-gated potassium channel impairing toxin</keyword>